<sequence length="172" mass="19204">MSDVELDHEYWMRHALTLAKRAWDEREVPVGAVLVHNHRVIGEGWNRPIGRHDPTAHAEIMALRQGGLVLQNYRLLDTTLYVTLEPCVMCAGAMVHSRIGRVVFGARDAKTGAAGSLIDVLHHPGMNHRVEIIEGVLRDECATLLSDFFRMRRQEIKALKKADRAEGAGPAV</sequence>
<organism>
    <name type="scientific">Salmonella typhi</name>
    <dbReference type="NCBI Taxonomy" id="90370"/>
    <lineage>
        <taxon>Bacteria</taxon>
        <taxon>Pseudomonadati</taxon>
        <taxon>Pseudomonadota</taxon>
        <taxon>Gammaproteobacteria</taxon>
        <taxon>Enterobacterales</taxon>
        <taxon>Enterobacteriaceae</taxon>
        <taxon>Salmonella</taxon>
    </lineage>
</organism>
<keyword id="KW-0378">Hydrolase</keyword>
<keyword id="KW-0479">Metal-binding</keyword>
<keyword id="KW-0819">tRNA processing</keyword>
<keyword id="KW-0862">Zinc</keyword>
<proteinExistence type="inferred from homology"/>
<accession>Q8XGY4</accession>
<accession>Q7AMI0</accession>
<reference key="1">
    <citation type="journal article" date="2001" name="Nature">
        <title>Complete genome sequence of a multiple drug resistant Salmonella enterica serovar Typhi CT18.</title>
        <authorList>
            <person name="Parkhill J."/>
            <person name="Dougan G."/>
            <person name="James K.D."/>
            <person name="Thomson N.R."/>
            <person name="Pickard D."/>
            <person name="Wain J."/>
            <person name="Churcher C.M."/>
            <person name="Mungall K.L."/>
            <person name="Bentley S.D."/>
            <person name="Holden M.T.G."/>
            <person name="Sebaihia M."/>
            <person name="Baker S."/>
            <person name="Basham D."/>
            <person name="Brooks K."/>
            <person name="Chillingworth T."/>
            <person name="Connerton P."/>
            <person name="Cronin A."/>
            <person name="Davis P."/>
            <person name="Davies R.M."/>
            <person name="Dowd L."/>
            <person name="White N."/>
            <person name="Farrar J."/>
            <person name="Feltwell T."/>
            <person name="Hamlin N."/>
            <person name="Haque A."/>
            <person name="Hien T.T."/>
            <person name="Holroyd S."/>
            <person name="Jagels K."/>
            <person name="Krogh A."/>
            <person name="Larsen T.S."/>
            <person name="Leather S."/>
            <person name="Moule S."/>
            <person name="O'Gaora P."/>
            <person name="Parry C."/>
            <person name="Quail M.A."/>
            <person name="Rutherford K.M."/>
            <person name="Simmonds M."/>
            <person name="Skelton J."/>
            <person name="Stevens K."/>
            <person name="Whitehead S."/>
            <person name="Barrell B.G."/>
        </authorList>
    </citation>
    <scope>NUCLEOTIDE SEQUENCE [LARGE SCALE GENOMIC DNA]</scope>
    <source>
        <strain>CT18</strain>
    </source>
</reference>
<reference key="2">
    <citation type="journal article" date="2003" name="J. Bacteriol.">
        <title>Comparative genomics of Salmonella enterica serovar Typhi strains Ty2 and CT18.</title>
        <authorList>
            <person name="Deng W."/>
            <person name="Liou S.-R."/>
            <person name="Plunkett G. III"/>
            <person name="Mayhew G.F."/>
            <person name="Rose D.J."/>
            <person name="Burland V."/>
            <person name="Kodoyianni V."/>
            <person name="Schwartz D.C."/>
            <person name="Blattner F.R."/>
        </authorList>
    </citation>
    <scope>NUCLEOTIDE SEQUENCE [LARGE SCALE GENOMIC DNA]</scope>
    <source>
        <strain>ATCC 700931 / Ty2</strain>
    </source>
</reference>
<protein>
    <recommendedName>
        <fullName evidence="1">tRNA-specific adenosine deaminase</fullName>
        <ecNumber evidence="1">3.5.4.33</ecNumber>
    </recommendedName>
</protein>
<feature type="chain" id="PRO_0000171736" description="tRNA-specific adenosine deaminase">
    <location>
        <begin position="1"/>
        <end position="172"/>
    </location>
</feature>
<feature type="domain" description="CMP/dCMP-type deaminase" evidence="2">
    <location>
        <begin position="6"/>
        <end position="117"/>
    </location>
</feature>
<feature type="active site" description="Proton donor" evidence="1">
    <location>
        <position position="59"/>
    </location>
</feature>
<feature type="binding site" evidence="1">
    <location>
        <position position="57"/>
    </location>
    <ligand>
        <name>Zn(2+)</name>
        <dbReference type="ChEBI" id="CHEBI:29105"/>
        <note>catalytic</note>
    </ligand>
</feature>
<feature type="binding site" evidence="1">
    <location>
        <position position="87"/>
    </location>
    <ligand>
        <name>Zn(2+)</name>
        <dbReference type="ChEBI" id="CHEBI:29105"/>
        <note>catalytic</note>
    </ligand>
</feature>
<feature type="binding site" evidence="1">
    <location>
        <position position="90"/>
    </location>
    <ligand>
        <name>Zn(2+)</name>
        <dbReference type="ChEBI" id="CHEBI:29105"/>
        <note>catalytic</note>
    </ligand>
</feature>
<name>TADA_SALTI</name>
<comment type="function">
    <text evidence="1">Catalyzes the deamination of adenosine to inosine at the wobble position 34 of tRNA(Arg2).</text>
</comment>
<comment type="catalytic activity">
    <reaction evidence="1">
        <text>adenosine(34) in tRNA + H2O + H(+) = inosine(34) in tRNA + NH4(+)</text>
        <dbReference type="Rhea" id="RHEA:43168"/>
        <dbReference type="Rhea" id="RHEA-COMP:10373"/>
        <dbReference type="Rhea" id="RHEA-COMP:10374"/>
        <dbReference type="ChEBI" id="CHEBI:15377"/>
        <dbReference type="ChEBI" id="CHEBI:15378"/>
        <dbReference type="ChEBI" id="CHEBI:28938"/>
        <dbReference type="ChEBI" id="CHEBI:74411"/>
        <dbReference type="ChEBI" id="CHEBI:82852"/>
        <dbReference type="EC" id="3.5.4.33"/>
    </reaction>
</comment>
<comment type="cofactor">
    <cofactor evidence="1">
        <name>Zn(2+)</name>
        <dbReference type="ChEBI" id="CHEBI:29105"/>
    </cofactor>
    <text evidence="1">Binds 1 zinc ion per subunit.</text>
</comment>
<comment type="subunit">
    <text evidence="1">Homodimer.</text>
</comment>
<comment type="similarity">
    <text evidence="1">Belongs to the cytidine and deoxycytidylate deaminase family.</text>
</comment>
<comment type="sequence caution" evidence="3">
    <conflict type="erroneous initiation">
        <sequence resource="EMBL-CDS" id="AAO68014"/>
    </conflict>
    <text>Extended N-terminus.</text>
</comment>
<comment type="sequence caution" evidence="3">
    <conflict type="erroneous initiation">
        <sequence resource="EMBL-CDS" id="CAD02770"/>
    </conflict>
    <text>Extended N-terminus.</text>
</comment>
<evidence type="ECO:0000255" key="1">
    <source>
        <dbReference type="HAMAP-Rule" id="MF_00972"/>
    </source>
</evidence>
<evidence type="ECO:0000255" key="2">
    <source>
        <dbReference type="PROSITE-ProRule" id="PRU01083"/>
    </source>
</evidence>
<evidence type="ECO:0000305" key="3"/>
<dbReference type="EC" id="3.5.4.33" evidence="1"/>
<dbReference type="EMBL" id="AL513382">
    <property type="protein sequence ID" value="CAD02770.1"/>
    <property type="status" value="ALT_INIT"/>
    <property type="molecule type" value="Genomic_DNA"/>
</dbReference>
<dbReference type="EMBL" id="AE014613">
    <property type="protein sequence ID" value="AAO68014.1"/>
    <property type="status" value="ALT_INIT"/>
    <property type="molecule type" value="Genomic_DNA"/>
</dbReference>
<dbReference type="RefSeq" id="NP_457097.1">
    <property type="nucleotide sequence ID" value="NC_003198.1"/>
</dbReference>
<dbReference type="SMR" id="Q8XGY4"/>
<dbReference type="STRING" id="220341.gene:17586704"/>
<dbReference type="KEGG" id="stt:t0289"/>
<dbReference type="KEGG" id="sty:STY2814"/>
<dbReference type="PATRIC" id="fig|220341.7.peg.2862"/>
<dbReference type="eggNOG" id="COG0590">
    <property type="taxonomic scope" value="Bacteria"/>
</dbReference>
<dbReference type="HOGENOM" id="CLU_025810_3_0_6"/>
<dbReference type="OMA" id="PCQMCAG"/>
<dbReference type="Proteomes" id="UP000000541">
    <property type="component" value="Chromosome"/>
</dbReference>
<dbReference type="Proteomes" id="UP000002670">
    <property type="component" value="Chromosome"/>
</dbReference>
<dbReference type="GO" id="GO:0052717">
    <property type="term" value="F:tRNA-specific adenosine-34 deaminase activity"/>
    <property type="evidence" value="ECO:0007669"/>
    <property type="project" value="UniProtKB-UniRule"/>
</dbReference>
<dbReference type="GO" id="GO:0008270">
    <property type="term" value="F:zinc ion binding"/>
    <property type="evidence" value="ECO:0007669"/>
    <property type="project" value="UniProtKB-UniRule"/>
</dbReference>
<dbReference type="GO" id="GO:0002100">
    <property type="term" value="P:tRNA wobble adenosine to inosine editing"/>
    <property type="evidence" value="ECO:0007669"/>
    <property type="project" value="UniProtKB-UniRule"/>
</dbReference>
<dbReference type="CDD" id="cd01285">
    <property type="entry name" value="nucleoside_deaminase"/>
    <property type="match status" value="1"/>
</dbReference>
<dbReference type="FunFam" id="3.40.140.10:FF:000005">
    <property type="entry name" value="tRNA-specific adenosine deaminase"/>
    <property type="match status" value="1"/>
</dbReference>
<dbReference type="Gene3D" id="3.40.140.10">
    <property type="entry name" value="Cytidine Deaminase, domain 2"/>
    <property type="match status" value="1"/>
</dbReference>
<dbReference type="HAMAP" id="MF_00972">
    <property type="entry name" value="tRNA_aden_deaminase"/>
    <property type="match status" value="1"/>
</dbReference>
<dbReference type="InterPro" id="IPR016192">
    <property type="entry name" value="APOBEC/CMP_deaminase_Zn-bd"/>
</dbReference>
<dbReference type="InterPro" id="IPR002125">
    <property type="entry name" value="CMP_dCMP_dom"/>
</dbReference>
<dbReference type="InterPro" id="IPR016193">
    <property type="entry name" value="Cytidine_deaminase-like"/>
</dbReference>
<dbReference type="InterPro" id="IPR028883">
    <property type="entry name" value="tRNA_aden_deaminase"/>
</dbReference>
<dbReference type="NCBIfam" id="NF008113">
    <property type="entry name" value="PRK10860.1"/>
    <property type="match status" value="1"/>
</dbReference>
<dbReference type="PANTHER" id="PTHR11079">
    <property type="entry name" value="CYTOSINE DEAMINASE FAMILY MEMBER"/>
    <property type="match status" value="1"/>
</dbReference>
<dbReference type="PANTHER" id="PTHR11079:SF202">
    <property type="entry name" value="TRNA-SPECIFIC ADENOSINE DEAMINASE"/>
    <property type="match status" value="1"/>
</dbReference>
<dbReference type="Pfam" id="PF14437">
    <property type="entry name" value="MafB19-deam"/>
    <property type="match status" value="1"/>
</dbReference>
<dbReference type="SUPFAM" id="SSF53927">
    <property type="entry name" value="Cytidine deaminase-like"/>
    <property type="match status" value="1"/>
</dbReference>
<dbReference type="PROSITE" id="PS00903">
    <property type="entry name" value="CYT_DCMP_DEAMINASES_1"/>
    <property type="match status" value="1"/>
</dbReference>
<dbReference type="PROSITE" id="PS51747">
    <property type="entry name" value="CYT_DCMP_DEAMINASES_2"/>
    <property type="match status" value="1"/>
</dbReference>
<gene>
    <name evidence="1" type="primary">tadA</name>
    <name type="ordered locus">STY2814</name>
    <name type="ordered locus">t0289</name>
</gene>